<organism>
    <name type="scientific">Helicobacter pylori (strain ATCC 700392 / 26695)</name>
    <name type="common">Campylobacter pylori</name>
    <dbReference type="NCBI Taxonomy" id="85962"/>
    <lineage>
        <taxon>Bacteria</taxon>
        <taxon>Pseudomonadati</taxon>
        <taxon>Campylobacterota</taxon>
        <taxon>Epsilonproteobacteria</taxon>
        <taxon>Campylobacterales</taxon>
        <taxon>Helicobacteraceae</taxon>
        <taxon>Helicobacter</taxon>
    </lineage>
</organism>
<sequence>MAKKKIAISCGDIQGVGLELILKSHKEVSALCEPLYLTDGELLERANQLLHNAYETKVLNALAIDAPLPLLNSSTIGKVSAQSGAYSFESFKKACELADSKEVDGICTLPINKLAWQQAQIPFVGHTDFLKQRYKDHQIIMMLGCSKLFVGLFSDHVPLGAVSQLIQVGALVKFLLAFQKSTQAKIVQVCGFNPHAGEEGLFGEEDERILKAIQKSNQTLGFECFLGPLPADSAFAPNKRKITPFYVSMSHDVGLAPLKALYFDESINVSLNAPILRTSTDHGTAFDIAYQNKANNKSYLNAIKYLA</sequence>
<dbReference type="EC" id="1.1.1.262" evidence="1"/>
<dbReference type="EMBL" id="AE000511">
    <property type="protein sequence ID" value="AAD08621.1"/>
    <property type="molecule type" value="Genomic_DNA"/>
</dbReference>
<dbReference type="PIR" id="G64717">
    <property type="entry name" value="G64717"/>
</dbReference>
<dbReference type="RefSeq" id="NP_208374.1">
    <property type="nucleotide sequence ID" value="NC_000915.1"/>
</dbReference>
<dbReference type="RefSeq" id="WP_001075036.1">
    <property type="nucleotide sequence ID" value="NC_018939.1"/>
</dbReference>
<dbReference type="SMR" id="O26103"/>
<dbReference type="DIP" id="DIP-3611N"/>
<dbReference type="FunCoup" id="O26103">
    <property type="interactions" value="221"/>
</dbReference>
<dbReference type="IntAct" id="O26103">
    <property type="interactions" value="1"/>
</dbReference>
<dbReference type="MINT" id="O26103"/>
<dbReference type="STRING" id="85962.HP_1583"/>
<dbReference type="PaxDb" id="85962-C694_08200"/>
<dbReference type="EnsemblBacteria" id="AAD08621">
    <property type="protein sequence ID" value="AAD08621"/>
    <property type="gene ID" value="HP_1583"/>
</dbReference>
<dbReference type="KEGG" id="heo:C694_08200"/>
<dbReference type="KEGG" id="hpy:HP_1583"/>
<dbReference type="PATRIC" id="fig|85962.47.peg.1701"/>
<dbReference type="eggNOG" id="COG1995">
    <property type="taxonomic scope" value="Bacteria"/>
</dbReference>
<dbReference type="InParanoid" id="O26103"/>
<dbReference type="OrthoDB" id="9801783at2"/>
<dbReference type="PhylomeDB" id="O26103"/>
<dbReference type="UniPathway" id="UPA00244">
    <property type="reaction ID" value="UER00312"/>
</dbReference>
<dbReference type="Proteomes" id="UP000000429">
    <property type="component" value="Chromosome"/>
</dbReference>
<dbReference type="GO" id="GO:0005737">
    <property type="term" value="C:cytoplasm"/>
    <property type="evidence" value="ECO:0007669"/>
    <property type="project" value="UniProtKB-SubCell"/>
</dbReference>
<dbReference type="GO" id="GO:0050570">
    <property type="term" value="F:4-hydroxythreonine-4-phosphate dehydrogenase activity"/>
    <property type="evidence" value="ECO:0007669"/>
    <property type="project" value="UniProtKB-UniRule"/>
</dbReference>
<dbReference type="GO" id="GO:0050897">
    <property type="term" value="F:cobalt ion binding"/>
    <property type="evidence" value="ECO:0007669"/>
    <property type="project" value="UniProtKB-UniRule"/>
</dbReference>
<dbReference type="GO" id="GO:0000287">
    <property type="term" value="F:magnesium ion binding"/>
    <property type="evidence" value="ECO:0007669"/>
    <property type="project" value="UniProtKB-UniRule"/>
</dbReference>
<dbReference type="GO" id="GO:0051287">
    <property type="term" value="F:NAD binding"/>
    <property type="evidence" value="ECO:0007669"/>
    <property type="project" value="InterPro"/>
</dbReference>
<dbReference type="GO" id="GO:0008270">
    <property type="term" value="F:zinc ion binding"/>
    <property type="evidence" value="ECO:0007669"/>
    <property type="project" value="UniProtKB-UniRule"/>
</dbReference>
<dbReference type="GO" id="GO:0042823">
    <property type="term" value="P:pyridoxal phosphate biosynthetic process"/>
    <property type="evidence" value="ECO:0007669"/>
    <property type="project" value="UniProtKB-UniRule"/>
</dbReference>
<dbReference type="GO" id="GO:0008615">
    <property type="term" value="P:pyridoxine biosynthetic process"/>
    <property type="evidence" value="ECO:0007669"/>
    <property type="project" value="UniProtKB-UniRule"/>
</dbReference>
<dbReference type="Gene3D" id="3.40.718.10">
    <property type="entry name" value="Isopropylmalate Dehydrogenase"/>
    <property type="match status" value="1"/>
</dbReference>
<dbReference type="HAMAP" id="MF_02086">
    <property type="entry name" value="PdxA_Epsilonprot"/>
    <property type="match status" value="1"/>
</dbReference>
<dbReference type="InterPro" id="IPR037539">
    <property type="entry name" value="PdxA_epsilonprot"/>
</dbReference>
<dbReference type="InterPro" id="IPR005255">
    <property type="entry name" value="PdxA_fam"/>
</dbReference>
<dbReference type="NCBIfam" id="TIGR00557">
    <property type="entry name" value="pdxA"/>
    <property type="match status" value="1"/>
</dbReference>
<dbReference type="NCBIfam" id="NF003040">
    <property type="entry name" value="PRK03946.1"/>
    <property type="match status" value="1"/>
</dbReference>
<dbReference type="PANTHER" id="PTHR30004">
    <property type="entry name" value="4-HYDROXYTHREONINE-4-PHOSPHATE DEHYDROGENASE"/>
    <property type="match status" value="1"/>
</dbReference>
<dbReference type="PANTHER" id="PTHR30004:SF6">
    <property type="entry name" value="D-THREONATE 4-PHOSPHATE DEHYDROGENASE"/>
    <property type="match status" value="1"/>
</dbReference>
<dbReference type="Pfam" id="PF04166">
    <property type="entry name" value="PdxA"/>
    <property type="match status" value="1"/>
</dbReference>
<dbReference type="SUPFAM" id="SSF53659">
    <property type="entry name" value="Isocitrate/Isopropylmalate dehydrogenase-like"/>
    <property type="match status" value="1"/>
</dbReference>
<reference key="1">
    <citation type="journal article" date="1997" name="Nature">
        <title>The complete genome sequence of the gastric pathogen Helicobacter pylori.</title>
        <authorList>
            <person name="Tomb J.-F."/>
            <person name="White O."/>
            <person name="Kerlavage A.R."/>
            <person name="Clayton R.A."/>
            <person name="Sutton G.G."/>
            <person name="Fleischmann R.D."/>
            <person name="Ketchum K.A."/>
            <person name="Klenk H.-P."/>
            <person name="Gill S.R."/>
            <person name="Dougherty B.A."/>
            <person name="Nelson K.E."/>
            <person name="Quackenbush J."/>
            <person name="Zhou L."/>
            <person name="Kirkness E.F."/>
            <person name="Peterson S.N."/>
            <person name="Loftus B.J."/>
            <person name="Richardson D.L."/>
            <person name="Dodson R.J."/>
            <person name="Khalak H.G."/>
            <person name="Glodek A."/>
            <person name="McKenney K."/>
            <person name="FitzGerald L.M."/>
            <person name="Lee N."/>
            <person name="Adams M.D."/>
            <person name="Hickey E.K."/>
            <person name="Berg D.E."/>
            <person name="Gocayne J.D."/>
            <person name="Utterback T.R."/>
            <person name="Peterson J.D."/>
            <person name="Kelley J.M."/>
            <person name="Cotton M.D."/>
            <person name="Weidman J.F."/>
            <person name="Fujii C."/>
            <person name="Bowman C."/>
            <person name="Watthey L."/>
            <person name="Wallin E."/>
            <person name="Hayes W.S."/>
            <person name="Borodovsky M."/>
            <person name="Karp P.D."/>
            <person name="Smith H.O."/>
            <person name="Fraser C.M."/>
            <person name="Venter J.C."/>
        </authorList>
    </citation>
    <scope>NUCLEOTIDE SEQUENCE [LARGE SCALE GENOMIC DNA]</scope>
    <source>
        <strain>ATCC 700392 / 26695</strain>
    </source>
</reference>
<name>PDXA_HELPY</name>
<gene>
    <name evidence="1" type="primary">pdxA</name>
    <name type="ordered locus">HP_1583</name>
</gene>
<accession>O26103</accession>
<feature type="chain" id="PRO_0000188809" description="4-hydroxythreonine-4-phosphate dehydrogenase">
    <location>
        <begin position="1"/>
        <end position="307"/>
    </location>
</feature>
<feature type="binding site" evidence="1">
    <location>
        <position position="126"/>
    </location>
    <ligand>
        <name>substrate</name>
    </ligand>
</feature>
<feature type="binding site" evidence="1">
    <location>
        <position position="127"/>
    </location>
    <ligand>
        <name>substrate</name>
    </ligand>
</feature>
<feature type="binding site" evidence="1">
    <location>
        <position position="156"/>
    </location>
    <ligand>
        <name>a divalent metal cation</name>
        <dbReference type="ChEBI" id="CHEBI:60240"/>
        <note>ligand shared between dimeric partners</note>
    </ligand>
</feature>
<feature type="binding site" evidence="1">
    <location>
        <position position="195"/>
    </location>
    <ligand>
        <name>a divalent metal cation</name>
        <dbReference type="ChEBI" id="CHEBI:60240"/>
        <note>ligand shared between dimeric partners</note>
    </ligand>
</feature>
<feature type="binding site" evidence="1">
    <location>
        <position position="251"/>
    </location>
    <ligand>
        <name>a divalent metal cation</name>
        <dbReference type="ChEBI" id="CHEBI:60240"/>
        <note>ligand shared between dimeric partners</note>
    </ligand>
</feature>
<feature type="binding site" evidence="1">
    <location>
        <position position="259"/>
    </location>
    <ligand>
        <name>substrate</name>
    </ligand>
</feature>
<feature type="binding site" evidence="1">
    <location>
        <position position="268"/>
    </location>
    <ligand>
        <name>substrate</name>
    </ligand>
</feature>
<feature type="binding site" evidence="1">
    <location>
        <position position="277"/>
    </location>
    <ligand>
        <name>substrate</name>
    </ligand>
</feature>
<keyword id="KW-0170">Cobalt</keyword>
<keyword id="KW-0963">Cytoplasm</keyword>
<keyword id="KW-0460">Magnesium</keyword>
<keyword id="KW-0479">Metal-binding</keyword>
<keyword id="KW-0520">NAD</keyword>
<keyword id="KW-0521">NADP</keyword>
<keyword id="KW-0560">Oxidoreductase</keyword>
<keyword id="KW-0664">Pyridoxine biosynthesis</keyword>
<keyword id="KW-1185">Reference proteome</keyword>
<keyword id="KW-0862">Zinc</keyword>
<proteinExistence type="inferred from homology"/>
<comment type="function">
    <text evidence="1">Catalyzes the NAD(P)-dependent oxidation of 4-(phosphooxy)-L-threonine (HTP) into 2-amino-3-oxo-4-(phosphooxy)butyric acid which spontaneously decarboxylates to form 3-amino-2-oxopropyl phosphate (AHAP).</text>
</comment>
<comment type="catalytic activity">
    <reaction evidence="1">
        <text>4-(phosphooxy)-L-threonine + NAD(+) = 3-amino-2-oxopropyl phosphate + CO2 + NADH</text>
        <dbReference type="Rhea" id="RHEA:32275"/>
        <dbReference type="ChEBI" id="CHEBI:16526"/>
        <dbReference type="ChEBI" id="CHEBI:57279"/>
        <dbReference type="ChEBI" id="CHEBI:57540"/>
        <dbReference type="ChEBI" id="CHEBI:57945"/>
        <dbReference type="ChEBI" id="CHEBI:58452"/>
        <dbReference type="EC" id="1.1.1.262"/>
    </reaction>
</comment>
<comment type="cofactor">
    <cofactor evidence="1">
        <name>Zn(2+)</name>
        <dbReference type="ChEBI" id="CHEBI:29105"/>
    </cofactor>
    <cofactor evidence="1">
        <name>Mg(2+)</name>
        <dbReference type="ChEBI" id="CHEBI:18420"/>
    </cofactor>
    <cofactor evidence="1">
        <name>Co(2+)</name>
        <dbReference type="ChEBI" id="CHEBI:48828"/>
    </cofactor>
</comment>
<comment type="pathway">
    <text evidence="1">Cofactor biosynthesis; pyridoxine 5'-phosphate biosynthesis; pyridoxine 5'-phosphate from D-erythrose 4-phosphate: step 4/5.</text>
</comment>
<comment type="subunit">
    <text evidence="1">Homodimer.</text>
</comment>
<comment type="subcellular location">
    <subcellularLocation>
        <location evidence="1">Cytoplasm</location>
    </subcellularLocation>
</comment>
<comment type="miscellaneous">
    <text evidence="1">The active site is located at the dimer interface.</text>
</comment>
<comment type="similarity">
    <text evidence="1">Belongs to the PdxA family.</text>
</comment>
<evidence type="ECO:0000255" key="1">
    <source>
        <dbReference type="HAMAP-Rule" id="MF_02086"/>
    </source>
</evidence>
<protein>
    <recommendedName>
        <fullName evidence="1">4-hydroxythreonine-4-phosphate dehydrogenase</fullName>
        <ecNumber evidence="1">1.1.1.262</ecNumber>
    </recommendedName>
    <alternativeName>
        <fullName evidence="1">4-(phosphohydroxy)-L-threonine dehydrogenase</fullName>
    </alternativeName>
</protein>